<feature type="chain" id="PRO_0000082549" description="Ubiquitin-conjugating enzyme E2 6">
    <location>
        <begin position="1"/>
        <end position="242"/>
    </location>
</feature>
<feature type="topological domain" description="Cytoplasmic" evidence="2">
    <location>
        <begin position="1"/>
        <end position="220"/>
    </location>
</feature>
<feature type="transmembrane region" description="Helical" evidence="2">
    <location>
        <begin position="221"/>
        <end position="240"/>
    </location>
</feature>
<feature type="domain" description="UBC core" evidence="3">
    <location>
        <begin position="5"/>
        <end position="156"/>
    </location>
</feature>
<feature type="region of interest" description="Disordered" evidence="4">
    <location>
        <begin position="170"/>
        <end position="190"/>
    </location>
</feature>
<feature type="active site" description="Glycyl thioester intermediate" evidence="3">
    <location>
        <position position="87"/>
    </location>
</feature>
<evidence type="ECO:0000250" key="1">
    <source>
        <dbReference type="UniProtKB" id="Q5VVX9"/>
    </source>
</evidence>
<evidence type="ECO:0000255" key="2"/>
<evidence type="ECO:0000255" key="3">
    <source>
        <dbReference type="PROSITE-ProRule" id="PRU00388"/>
    </source>
</evidence>
<evidence type="ECO:0000256" key="4">
    <source>
        <dbReference type="SAM" id="MobiDB-lite"/>
    </source>
</evidence>
<protein>
    <recommendedName>
        <fullName>Ubiquitin-conjugating enzyme E2 6</fullName>
        <ecNumber>2.3.2.23</ecNumber>
    </recommendedName>
    <alternativeName>
        <fullName>E2 ubiquitin-conjugating enzyme 6</fullName>
    </alternativeName>
    <alternativeName>
        <fullName>Ubiquitin carrier protein UBC6</fullName>
    </alternativeName>
    <alternativeName>
        <fullName>Ubiquitin-protein ligase UBC6</fullName>
    </alternativeName>
</protein>
<organism>
    <name type="scientific">Debaryomyces hansenii (strain ATCC 36239 / CBS 767 / BCRC 21394 / JCM 1990 / NBRC 0083 / IGC 2968)</name>
    <name type="common">Yeast</name>
    <name type="synonym">Torulaspora hansenii</name>
    <dbReference type="NCBI Taxonomy" id="284592"/>
    <lineage>
        <taxon>Eukaryota</taxon>
        <taxon>Fungi</taxon>
        <taxon>Dikarya</taxon>
        <taxon>Ascomycota</taxon>
        <taxon>Saccharomycotina</taxon>
        <taxon>Pichiomycetes</taxon>
        <taxon>Debaryomycetaceae</taxon>
        <taxon>Debaryomyces</taxon>
    </lineage>
</organism>
<gene>
    <name type="primary">UBC6</name>
    <name type="ordered locus">DEHA2A09746g</name>
</gene>
<name>UBC6_DEBHA</name>
<comment type="function">
    <text evidence="3">Catalyzes the covalent attachment of ubiquitin to other proteins. Functions in degradation of misfolded or regulated proteins localized in the endoplasmic reticulum (ER) lumen or membrane via the ubiquitin-proteasome system. Cognate E2 conjugating enzyme for the DOA10 ubiquitin ligase complex, which is part of the ERAD-C pathway responsible for the rapid degradation of membrane proteins with misfolded cytoplasmic domains.</text>
</comment>
<comment type="catalytic activity">
    <reaction evidence="3">
        <text>S-ubiquitinyl-[E1 ubiquitin-activating enzyme]-L-cysteine + [E2 ubiquitin-conjugating enzyme]-L-cysteine = [E1 ubiquitin-activating enzyme]-L-cysteine + S-ubiquitinyl-[E2 ubiquitin-conjugating enzyme]-L-cysteine.</text>
        <dbReference type="EC" id="2.3.2.23"/>
    </reaction>
</comment>
<comment type="pathway">
    <text evidence="3">Protein modification; protein ubiquitination.</text>
</comment>
<comment type="subcellular location">
    <subcellularLocation>
        <location evidence="1">Endoplasmic reticulum membrane</location>
    </subcellularLocation>
</comment>
<comment type="similarity">
    <text evidence="3">Belongs to the ubiquitin-conjugating enzyme family.</text>
</comment>
<sequence>MASRQSQKRLTKEYKAITLNPPPYVSAKPNDENILEWHYVITGPPHTPFEEGQYHGILRFPSEYPFKPPSISMITPNGRFACNTRLCLSMSDYHPDTWNPAWSVATILTGLLSFMTGDESTTGSITTSDNVKKRLARSSKEWNNAENQRFTKQFPDLVAQNKVDVAARNAREQAAATTDSTDPEKPFDVRENIDSLDPEDRARLLVEQDDHSTPSFGVQRFTLVGVVVAAFIAAYFNFFSRT</sequence>
<proteinExistence type="inferred from homology"/>
<reference key="1">
    <citation type="journal article" date="2004" name="Nature">
        <title>Genome evolution in yeasts.</title>
        <authorList>
            <person name="Dujon B."/>
            <person name="Sherman D."/>
            <person name="Fischer G."/>
            <person name="Durrens P."/>
            <person name="Casaregola S."/>
            <person name="Lafontaine I."/>
            <person name="de Montigny J."/>
            <person name="Marck C."/>
            <person name="Neuveglise C."/>
            <person name="Talla E."/>
            <person name="Goffard N."/>
            <person name="Frangeul L."/>
            <person name="Aigle M."/>
            <person name="Anthouard V."/>
            <person name="Babour A."/>
            <person name="Barbe V."/>
            <person name="Barnay S."/>
            <person name="Blanchin S."/>
            <person name="Beckerich J.-M."/>
            <person name="Beyne E."/>
            <person name="Bleykasten C."/>
            <person name="Boisrame A."/>
            <person name="Boyer J."/>
            <person name="Cattolico L."/>
            <person name="Confanioleri F."/>
            <person name="de Daruvar A."/>
            <person name="Despons L."/>
            <person name="Fabre E."/>
            <person name="Fairhead C."/>
            <person name="Ferry-Dumazet H."/>
            <person name="Groppi A."/>
            <person name="Hantraye F."/>
            <person name="Hennequin C."/>
            <person name="Jauniaux N."/>
            <person name="Joyet P."/>
            <person name="Kachouri R."/>
            <person name="Kerrest A."/>
            <person name="Koszul R."/>
            <person name="Lemaire M."/>
            <person name="Lesur I."/>
            <person name="Ma L."/>
            <person name="Muller H."/>
            <person name="Nicaud J.-M."/>
            <person name="Nikolski M."/>
            <person name="Oztas S."/>
            <person name="Ozier-Kalogeropoulos O."/>
            <person name="Pellenz S."/>
            <person name="Potier S."/>
            <person name="Richard G.-F."/>
            <person name="Straub M.-L."/>
            <person name="Suleau A."/>
            <person name="Swennen D."/>
            <person name="Tekaia F."/>
            <person name="Wesolowski-Louvel M."/>
            <person name="Westhof E."/>
            <person name="Wirth B."/>
            <person name="Zeniou-Meyer M."/>
            <person name="Zivanovic Y."/>
            <person name="Bolotin-Fukuhara M."/>
            <person name="Thierry A."/>
            <person name="Bouchier C."/>
            <person name="Caudron B."/>
            <person name="Scarpelli C."/>
            <person name="Gaillardin C."/>
            <person name="Weissenbach J."/>
            <person name="Wincker P."/>
            <person name="Souciet J.-L."/>
        </authorList>
    </citation>
    <scope>NUCLEOTIDE SEQUENCE [LARGE SCALE GENOMIC DNA]</scope>
    <source>
        <strain>ATCC 36239 / CBS 767 / BCRC 21394 / JCM 1990 / NBRC 0083 / IGC 2968</strain>
    </source>
</reference>
<keyword id="KW-0067">ATP-binding</keyword>
<keyword id="KW-0256">Endoplasmic reticulum</keyword>
<keyword id="KW-0472">Membrane</keyword>
<keyword id="KW-0547">Nucleotide-binding</keyword>
<keyword id="KW-1185">Reference proteome</keyword>
<keyword id="KW-0808">Transferase</keyword>
<keyword id="KW-0812">Transmembrane</keyword>
<keyword id="KW-1133">Transmembrane helix</keyword>
<keyword id="KW-0833">Ubl conjugation pathway</keyword>
<accession>Q6BYG4</accession>
<dbReference type="EC" id="2.3.2.23"/>
<dbReference type="EMBL" id="CR382133">
    <property type="protein sequence ID" value="CAG84716.2"/>
    <property type="molecule type" value="Genomic_DNA"/>
</dbReference>
<dbReference type="RefSeq" id="XP_456755.2">
    <property type="nucleotide sequence ID" value="XM_456755.1"/>
</dbReference>
<dbReference type="SMR" id="Q6BYG4"/>
<dbReference type="FunCoup" id="Q6BYG4">
    <property type="interactions" value="1006"/>
</dbReference>
<dbReference type="STRING" id="284592.Q6BYG4"/>
<dbReference type="GeneID" id="2899547"/>
<dbReference type="KEGG" id="dha:DEHA2A09746g"/>
<dbReference type="VEuPathDB" id="FungiDB:DEHA2A09746g"/>
<dbReference type="eggNOG" id="KOG0894">
    <property type="taxonomic scope" value="Eukaryota"/>
</dbReference>
<dbReference type="HOGENOM" id="CLU_041481_1_0_1"/>
<dbReference type="InParanoid" id="Q6BYG4"/>
<dbReference type="OMA" id="GWSVATI"/>
<dbReference type="OrthoDB" id="1158011at2759"/>
<dbReference type="UniPathway" id="UPA00143"/>
<dbReference type="Proteomes" id="UP000000599">
    <property type="component" value="Chromosome A"/>
</dbReference>
<dbReference type="GO" id="GO:0005789">
    <property type="term" value="C:endoplasmic reticulum membrane"/>
    <property type="evidence" value="ECO:0007669"/>
    <property type="project" value="UniProtKB-SubCell"/>
</dbReference>
<dbReference type="GO" id="GO:0005524">
    <property type="term" value="F:ATP binding"/>
    <property type="evidence" value="ECO:0007669"/>
    <property type="project" value="UniProtKB-KW"/>
</dbReference>
<dbReference type="GO" id="GO:0061631">
    <property type="term" value="F:ubiquitin conjugating enzyme activity"/>
    <property type="evidence" value="ECO:0007669"/>
    <property type="project" value="UniProtKB-EC"/>
</dbReference>
<dbReference type="GO" id="GO:0016567">
    <property type="term" value="P:protein ubiquitination"/>
    <property type="evidence" value="ECO:0007669"/>
    <property type="project" value="UniProtKB-UniPathway"/>
</dbReference>
<dbReference type="CDD" id="cd23799">
    <property type="entry name" value="UBCc_UBE2J"/>
    <property type="match status" value="1"/>
</dbReference>
<dbReference type="FunFam" id="3.10.110.10:FF:000023">
    <property type="entry name" value="Ubiquitin-conjugating enzyme E2 J2"/>
    <property type="match status" value="1"/>
</dbReference>
<dbReference type="Gene3D" id="3.10.110.10">
    <property type="entry name" value="Ubiquitin Conjugating Enzyme"/>
    <property type="match status" value="1"/>
</dbReference>
<dbReference type="InterPro" id="IPR050113">
    <property type="entry name" value="Ub_conjugating_enzyme"/>
</dbReference>
<dbReference type="InterPro" id="IPR000608">
    <property type="entry name" value="UBQ-conjugat_E2_core"/>
</dbReference>
<dbReference type="InterPro" id="IPR016135">
    <property type="entry name" value="UBQ-conjugating_enzyme/RWD"/>
</dbReference>
<dbReference type="PANTHER" id="PTHR24067">
    <property type="entry name" value="UBIQUITIN-CONJUGATING ENZYME E2"/>
    <property type="match status" value="1"/>
</dbReference>
<dbReference type="Pfam" id="PF00179">
    <property type="entry name" value="UQ_con"/>
    <property type="match status" value="1"/>
</dbReference>
<dbReference type="SMART" id="SM00212">
    <property type="entry name" value="UBCc"/>
    <property type="match status" value="1"/>
</dbReference>
<dbReference type="SUPFAM" id="SSF54495">
    <property type="entry name" value="UBC-like"/>
    <property type="match status" value="1"/>
</dbReference>
<dbReference type="PROSITE" id="PS50127">
    <property type="entry name" value="UBC_2"/>
    <property type="match status" value="1"/>
</dbReference>